<dbReference type="EMBL" id="AF286904">
    <property type="protein sequence ID" value="AAK60500.1"/>
    <property type="status" value="ALT_INIT"/>
    <property type="molecule type" value="mRNA"/>
</dbReference>
<dbReference type="EMBL" id="AK002010">
    <property type="protein sequence ID" value="BAA92032.1"/>
    <property type="status" value="ALT_INIT"/>
    <property type="molecule type" value="mRNA"/>
</dbReference>
<dbReference type="EMBL" id="AK001433">
    <property type="protein sequence ID" value="BAA91688.1"/>
    <property type="status" value="ALT_INIT"/>
    <property type="molecule type" value="mRNA"/>
</dbReference>
<dbReference type="EMBL" id="AK125789">
    <property type="protein sequence ID" value="BAG54249.1"/>
    <property type="molecule type" value="mRNA"/>
</dbReference>
<dbReference type="EMBL" id="CH471058">
    <property type="protein sequence ID" value="EAX11547.1"/>
    <property type="molecule type" value="Genomic_DNA"/>
</dbReference>
<dbReference type="EMBL" id="CH471058">
    <property type="protein sequence ID" value="EAX11548.1"/>
    <property type="molecule type" value="Genomic_DNA"/>
</dbReference>
<dbReference type="EMBL" id="BC093818">
    <property type="protein sequence ID" value="AAH93818.1"/>
    <property type="status" value="ALT_INIT"/>
    <property type="molecule type" value="mRNA"/>
</dbReference>
<dbReference type="EMBL" id="BC093820">
    <property type="protein sequence ID" value="AAH93820.1"/>
    <property type="status" value="ALT_INIT"/>
    <property type="molecule type" value="mRNA"/>
</dbReference>
<dbReference type="EMBL" id="AL117558">
    <property type="protein sequence ID" value="CAB55993.1"/>
    <property type="molecule type" value="mRNA"/>
</dbReference>
<dbReference type="CCDS" id="CCDS46422.1"/>
<dbReference type="PIR" id="T17303">
    <property type="entry name" value="T17303"/>
</dbReference>
<dbReference type="RefSeq" id="NP_056445.3">
    <property type="nucleotide sequence ID" value="NM_015630.3"/>
</dbReference>
<dbReference type="SMR" id="Q52LR7"/>
<dbReference type="BioGRID" id="117564">
    <property type="interactions" value="68"/>
</dbReference>
<dbReference type="ComplexPortal" id="CPX-978">
    <property type="entry name" value="NuA4 histone acetyltransferase complex"/>
</dbReference>
<dbReference type="CORUM" id="Q52LR7"/>
<dbReference type="FunCoup" id="Q52LR7">
    <property type="interactions" value="1826"/>
</dbReference>
<dbReference type="IntAct" id="Q52LR7">
    <property type="interactions" value="64"/>
</dbReference>
<dbReference type="MINT" id="Q52LR7"/>
<dbReference type="STRING" id="9606.ENSP00000258484"/>
<dbReference type="CarbonylDB" id="Q52LR7"/>
<dbReference type="GlyCosmos" id="Q52LR7">
    <property type="glycosylation" value="3 sites, 1 glycan"/>
</dbReference>
<dbReference type="GlyGen" id="Q52LR7">
    <property type="glycosylation" value="3 sites, 1 O-linked glycan (3 sites)"/>
</dbReference>
<dbReference type="iPTMnet" id="Q52LR7"/>
<dbReference type="PhosphoSitePlus" id="Q52LR7"/>
<dbReference type="BioMuta" id="EPC2"/>
<dbReference type="DMDM" id="108935980"/>
<dbReference type="jPOST" id="Q52LR7"/>
<dbReference type="MassIVE" id="Q52LR7"/>
<dbReference type="PaxDb" id="9606-ENSP00000258484"/>
<dbReference type="PeptideAtlas" id="Q52LR7"/>
<dbReference type="ProteomicsDB" id="62425"/>
<dbReference type="Pumba" id="Q52LR7"/>
<dbReference type="Antibodypedia" id="51789">
    <property type="antibodies" value="59 antibodies from 13 providers"/>
</dbReference>
<dbReference type="DNASU" id="26122"/>
<dbReference type="Ensembl" id="ENST00000258484.11">
    <property type="protein sequence ID" value="ENSP00000258484.6"/>
    <property type="gene ID" value="ENSG00000135999.13"/>
</dbReference>
<dbReference type="GeneID" id="26122"/>
<dbReference type="KEGG" id="hsa:26122"/>
<dbReference type="MANE-Select" id="ENST00000258484.11">
    <property type="protein sequence ID" value="ENSP00000258484.6"/>
    <property type="RefSeq nucleotide sequence ID" value="NM_015630.4"/>
    <property type="RefSeq protein sequence ID" value="NP_056445.3"/>
</dbReference>
<dbReference type="UCSC" id="uc010zbt.3">
    <property type="organism name" value="human"/>
</dbReference>
<dbReference type="AGR" id="HGNC:24543"/>
<dbReference type="CTD" id="26122"/>
<dbReference type="DisGeNET" id="26122"/>
<dbReference type="GeneCards" id="EPC2"/>
<dbReference type="HGNC" id="HGNC:24543">
    <property type="gene designation" value="EPC2"/>
</dbReference>
<dbReference type="HPA" id="ENSG00000135999">
    <property type="expression patterns" value="Low tissue specificity"/>
</dbReference>
<dbReference type="MalaCards" id="EPC2"/>
<dbReference type="MIM" id="611000">
    <property type="type" value="gene"/>
</dbReference>
<dbReference type="neXtProt" id="NX_Q52LR7"/>
<dbReference type="OpenTargets" id="ENSG00000135999"/>
<dbReference type="PharmGKB" id="PA134875170"/>
<dbReference type="VEuPathDB" id="HostDB:ENSG00000135999"/>
<dbReference type="eggNOG" id="KOG2261">
    <property type="taxonomic scope" value="Eukaryota"/>
</dbReference>
<dbReference type="GeneTree" id="ENSGT00940000158526"/>
<dbReference type="HOGENOM" id="CLU_012781_0_0_1"/>
<dbReference type="InParanoid" id="Q52LR7"/>
<dbReference type="OMA" id="DQANHTC"/>
<dbReference type="OrthoDB" id="435275at2759"/>
<dbReference type="PAN-GO" id="Q52LR7">
    <property type="GO annotations" value="2 GO annotations based on evolutionary models"/>
</dbReference>
<dbReference type="PhylomeDB" id="Q52LR7"/>
<dbReference type="TreeFam" id="TF106438"/>
<dbReference type="PathwayCommons" id="Q52LR7"/>
<dbReference type="SignaLink" id="Q52LR7"/>
<dbReference type="SIGNOR" id="Q52LR7"/>
<dbReference type="BioGRID-ORCS" id="26122">
    <property type="hits" value="209 hits in 1167 CRISPR screens"/>
</dbReference>
<dbReference type="ChiTaRS" id="EPC2">
    <property type="organism name" value="human"/>
</dbReference>
<dbReference type="GenomeRNAi" id="26122"/>
<dbReference type="Pharos" id="Q52LR7">
    <property type="development level" value="Tbio"/>
</dbReference>
<dbReference type="PRO" id="PR:Q52LR7"/>
<dbReference type="Proteomes" id="UP000005640">
    <property type="component" value="Chromosome 2"/>
</dbReference>
<dbReference type="RNAct" id="Q52LR7">
    <property type="molecule type" value="protein"/>
</dbReference>
<dbReference type="Bgee" id="ENSG00000135999">
    <property type="expression patterns" value="Expressed in germinal epithelium of ovary and 192 other cell types or tissues"/>
</dbReference>
<dbReference type="ExpressionAtlas" id="Q52LR7">
    <property type="expression patterns" value="baseline and differential"/>
</dbReference>
<dbReference type="GO" id="GO:0035267">
    <property type="term" value="C:NuA4 histone acetyltransferase complex"/>
    <property type="evidence" value="ECO:0000314"/>
    <property type="project" value="ComplexPortal"/>
</dbReference>
<dbReference type="GO" id="GO:0000786">
    <property type="term" value="C:nucleosome"/>
    <property type="evidence" value="ECO:0000314"/>
    <property type="project" value="ComplexPortal"/>
</dbReference>
<dbReference type="GO" id="GO:0005634">
    <property type="term" value="C:nucleus"/>
    <property type="evidence" value="ECO:0007669"/>
    <property type="project" value="UniProtKB-SubCell"/>
</dbReference>
<dbReference type="GO" id="GO:0032777">
    <property type="term" value="C:piccolo histone acetyltransferase complex"/>
    <property type="evidence" value="ECO:0000318"/>
    <property type="project" value="GO_Central"/>
</dbReference>
<dbReference type="GO" id="GO:0006325">
    <property type="term" value="P:chromatin organization"/>
    <property type="evidence" value="ECO:0007669"/>
    <property type="project" value="UniProtKB-KW"/>
</dbReference>
<dbReference type="GO" id="GO:0006281">
    <property type="term" value="P:DNA repair"/>
    <property type="evidence" value="ECO:0007669"/>
    <property type="project" value="UniProtKB-KW"/>
</dbReference>
<dbReference type="GO" id="GO:0045893">
    <property type="term" value="P:positive regulation of DNA-templated transcription"/>
    <property type="evidence" value="ECO:0000303"/>
    <property type="project" value="ComplexPortal"/>
</dbReference>
<dbReference type="GO" id="GO:1905168">
    <property type="term" value="P:positive regulation of double-strand break repair via homologous recombination"/>
    <property type="evidence" value="ECO:0000314"/>
    <property type="project" value="ComplexPortal"/>
</dbReference>
<dbReference type="GO" id="GO:0042981">
    <property type="term" value="P:regulation of apoptotic process"/>
    <property type="evidence" value="ECO:0000303"/>
    <property type="project" value="ComplexPortal"/>
</dbReference>
<dbReference type="GO" id="GO:0051726">
    <property type="term" value="P:regulation of cell cycle"/>
    <property type="evidence" value="ECO:0000315"/>
    <property type="project" value="ComplexPortal"/>
</dbReference>
<dbReference type="GO" id="GO:2000779">
    <property type="term" value="P:regulation of double-strand break repair"/>
    <property type="evidence" value="ECO:0000303"/>
    <property type="project" value="ComplexPortal"/>
</dbReference>
<dbReference type="GO" id="GO:0006357">
    <property type="term" value="P:regulation of transcription by RNA polymerase II"/>
    <property type="evidence" value="ECO:0000318"/>
    <property type="project" value="GO_Central"/>
</dbReference>
<dbReference type="InterPro" id="IPR024943">
    <property type="entry name" value="Enhancer_polycomb"/>
</dbReference>
<dbReference type="InterPro" id="IPR019542">
    <property type="entry name" value="Enhancer_polycomb-like_N"/>
</dbReference>
<dbReference type="InterPro" id="IPR009607">
    <property type="entry name" value="Enhancer_polycomb_C"/>
</dbReference>
<dbReference type="PANTHER" id="PTHR14898">
    <property type="entry name" value="ENHANCER OF POLYCOMB"/>
    <property type="match status" value="1"/>
</dbReference>
<dbReference type="Pfam" id="PF06752">
    <property type="entry name" value="E_Pc_C"/>
    <property type="match status" value="1"/>
</dbReference>
<dbReference type="Pfam" id="PF10513">
    <property type="entry name" value="EPL1"/>
    <property type="match status" value="1"/>
</dbReference>
<evidence type="ECO:0000250" key="1"/>
<evidence type="ECO:0000256" key="2">
    <source>
        <dbReference type="SAM" id="MobiDB-lite"/>
    </source>
</evidence>
<evidence type="ECO:0000305" key="3"/>
<evidence type="ECO:0007744" key="4">
    <source>
    </source>
</evidence>
<evidence type="ECO:0007744" key="5">
    <source>
    </source>
</evidence>
<evidence type="ECO:0007744" key="6">
    <source>
    </source>
</evidence>
<keyword id="KW-0156">Chromatin regulator</keyword>
<keyword id="KW-0227">DNA damage</keyword>
<keyword id="KW-0234">DNA repair</keyword>
<keyword id="KW-1017">Isopeptide bond</keyword>
<keyword id="KW-0539">Nucleus</keyword>
<keyword id="KW-0597">Phosphoprotein</keyword>
<keyword id="KW-1267">Proteomics identification</keyword>
<keyword id="KW-1185">Reference proteome</keyword>
<keyword id="KW-0804">Transcription</keyword>
<keyword id="KW-0805">Transcription regulation</keyword>
<keyword id="KW-0832">Ubl conjugation</keyword>
<comment type="function">
    <text evidence="1">May play a role in transcription or DNA repair.</text>
</comment>
<comment type="subcellular location">
    <subcellularLocation>
        <location evidence="1">Nucleus</location>
    </subcellularLocation>
</comment>
<comment type="similarity">
    <text evidence="3">Belongs to the enhancer of polycomb family.</text>
</comment>
<comment type="sequence caution" evidence="3">
    <conflict type="erroneous initiation">
        <sequence resource="EMBL-CDS" id="AAH93818"/>
    </conflict>
</comment>
<comment type="sequence caution" evidence="3">
    <conflict type="erroneous initiation">
        <sequence resource="EMBL-CDS" id="AAH93820"/>
    </conflict>
</comment>
<comment type="sequence caution" evidence="3">
    <conflict type="erroneous initiation">
        <sequence resource="EMBL-CDS" id="AAK60500"/>
    </conflict>
</comment>
<comment type="sequence caution" evidence="3">
    <conflict type="erroneous initiation">
        <sequence resource="EMBL-CDS" id="BAA91688"/>
    </conflict>
</comment>
<comment type="sequence caution" evidence="3">
    <conflict type="erroneous initiation">
        <sequence resource="EMBL-CDS" id="BAA92032"/>
    </conflict>
</comment>
<protein>
    <recommendedName>
        <fullName>Enhancer of polycomb homolog 2</fullName>
    </recommendedName>
    <alternativeName>
        <fullName>EPC-like</fullName>
    </alternativeName>
</protein>
<accession>Q52LR7</accession>
<accession>B3KWT7</accession>
<accession>D3DP89</accession>
<accession>Q7L9J1</accession>
<accession>Q96RR7</accession>
<accession>Q9NUT8</accession>
<accession>Q9NVR1</accession>
<accession>Q9UFM9</accession>
<reference key="1">
    <citation type="submission" date="2000-07" db="EMBL/GenBank/DDBJ databases">
        <title>Cloning and characterization of two human homologs of the enhancer of polycomb gene (EPC1) from Drosophila.</title>
        <authorList>
            <person name="Nunes D.N."/>
            <person name="Dias-Neto E."/>
            <person name="Brentani R.R."/>
            <person name="Camargo A.A."/>
        </authorList>
    </citation>
    <scope>NUCLEOTIDE SEQUENCE [MRNA]</scope>
</reference>
<reference key="2">
    <citation type="journal article" date="2004" name="Nat. Genet.">
        <title>Complete sequencing and characterization of 21,243 full-length human cDNAs.</title>
        <authorList>
            <person name="Ota T."/>
            <person name="Suzuki Y."/>
            <person name="Nishikawa T."/>
            <person name="Otsuki T."/>
            <person name="Sugiyama T."/>
            <person name="Irie R."/>
            <person name="Wakamatsu A."/>
            <person name="Hayashi K."/>
            <person name="Sato H."/>
            <person name="Nagai K."/>
            <person name="Kimura K."/>
            <person name="Makita H."/>
            <person name="Sekine M."/>
            <person name="Obayashi M."/>
            <person name="Nishi T."/>
            <person name="Shibahara T."/>
            <person name="Tanaka T."/>
            <person name="Ishii S."/>
            <person name="Yamamoto J."/>
            <person name="Saito K."/>
            <person name="Kawai Y."/>
            <person name="Isono Y."/>
            <person name="Nakamura Y."/>
            <person name="Nagahari K."/>
            <person name="Murakami K."/>
            <person name="Yasuda T."/>
            <person name="Iwayanagi T."/>
            <person name="Wagatsuma M."/>
            <person name="Shiratori A."/>
            <person name="Sudo H."/>
            <person name="Hosoiri T."/>
            <person name="Kaku Y."/>
            <person name="Kodaira H."/>
            <person name="Kondo H."/>
            <person name="Sugawara M."/>
            <person name="Takahashi M."/>
            <person name="Kanda K."/>
            <person name="Yokoi T."/>
            <person name="Furuya T."/>
            <person name="Kikkawa E."/>
            <person name="Omura Y."/>
            <person name="Abe K."/>
            <person name="Kamihara K."/>
            <person name="Katsuta N."/>
            <person name="Sato K."/>
            <person name="Tanikawa M."/>
            <person name="Yamazaki M."/>
            <person name="Ninomiya K."/>
            <person name="Ishibashi T."/>
            <person name="Yamashita H."/>
            <person name="Murakawa K."/>
            <person name="Fujimori K."/>
            <person name="Tanai H."/>
            <person name="Kimata M."/>
            <person name="Watanabe M."/>
            <person name="Hiraoka S."/>
            <person name="Chiba Y."/>
            <person name="Ishida S."/>
            <person name="Ono Y."/>
            <person name="Takiguchi S."/>
            <person name="Watanabe S."/>
            <person name="Yosida M."/>
            <person name="Hotuta T."/>
            <person name="Kusano J."/>
            <person name="Kanehori K."/>
            <person name="Takahashi-Fujii A."/>
            <person name="Hara H."/>
            <person name="Tanase T.-O."/>
            <person name="Nomura Y."/>
            <person name="Togiya S."/>
            <person name="Komai F."/>
            <person name="Hara R."/>
            <person name="Takeuchi K."/>
            <person name="Arita M."/>
            <person name="Imose N."/>
            <person name="Musashino K."/>
            <person name="Yuuki H."/>
            <person name="Oshima A."/>
            <person name="Sasaki N."/>
            <person name="Aotsuka S."/>
            <person name="Yoshikawa Y."/>
            <person name="Matsunawa H."/>
            <person name="Ichihara T."/>
            <person name="Shiohata N."/>
            <person name="Sano S."/>
            <person name="Moriya S."/>
            <person name="Momiyama H."/>
            <person name="Satoh N."/>
            <person name="Takami S."/>
            <person name="Terashima Y."/>
            <person name="Suzuki O."/>
            <person name="Nakagawa S."/>
            <person name="Senoh A."/>
            <person name="Mizoguchi H."/>
            <person name="Goto Y."/>
            <person name="Shimizu F."/>
            <person name="Wakebe H."/>
            <person name="Hishigaki H."/>
            <person name="Watanabe T."/>
            <person name="Sugiyama A."/>
            <person name="Takemoto M."/>
            <person name="Kawakami B."/>
            <person name="Yamazaki M."/>
            <person name="Watanabe K."/>
            <person name="Kumagai A."/>
            <person name="Itakura S."/>
            <person name="Fukuzumi Y."/>
            <person name="Fujimori Y."/>
            <person name="Komiyama M."/>
            <person name="Tashiro H."/>
            <person name="Tanigami A."/>
            <person name="Fujiwara T."/>
            <person name="Ono T."/>
            <person name="Yamada K."/>
            <person name="Fujii Y."/>
            <person name="Ozaki K."/>
            <person name="Hirao M."/>
            <person name="Ohmori Y."/>
            <person name="Kawabata A."/>
            <person name="Hikiji T."/>
            <person name="Kobatake N."/>
            <person name="Inagaki H."/>
            <person name="Ikema Y."/>
            <person name="Okamoto S."/>
            <person name="Okitani R."/>
            <person name="Kawakami T."/>
            <person name="Noguchi S."/>
            <person name="Itoh T."/>
            <person name="Shigeta K."/>
            <person name="Senba T."/>
            <person name="Matsumura K."/>
            <person name="Nakajima Y."/>
            <person name="Mizuno T."/>
            <person name="Morinaga M."/>
            <person name="Sasaki M."/>
            <person name="Togashi T."/>
            <person name="Oyama M."/>
            <person name="Hata H."/>
            <person name="Watanabe M."/>
            <person name="Komatsu T."/>
            <person name="Mizushima-Sugano J."/>
            <person name="Satoh T."/>
            <person name="Shirai Y."/>
            <person name="Takahashi Y."/>
            <person name="Nakagawa K."/>
            <person name="Okumura K."/>
            <person name="Nagase T."/>
            <person name="Nomura N."/>
            <person name="Kikuchi H."/>
            <person name="Masuho Y."/>
            <person name="Yamashita R."/>
            <person name="Nakai K."/>
            <person name="Yada T."/>
            <person name="Nakamura Y."/>
            <person name="Ohara O."/>
            <person name="Isogai T."/>
            <person name="Sugano S."/>
        </authorList>
    </citation>
    <scope>NUCLEOTIDE SEQUENCE [LARGE SCALE MRNA]</scope>
    <source>
        <tissue>Placenta</tissue>
        <tissue>Teratocarcinoma</tissue>
        <tissue>Testis</tissue>
    </source>
</reference>
<reference key="3">
    <citation type="submission" date="2005-09" db="EMBL/GenBank/DDBJ databases">
        <authorList>
            <person name="Mural R.J."/>
            <person name="Istrail S."/>
            <person name="Sutton G.G."/>
            <person name="Florea L."/>
            <person name="Halpern A.L."/>
            <person name="Mobarry C.M."/>
            <person name="Lippert R."/>
            <person name="Walenz B."/>
            <person name="Shatkay H."/>
            <person name="Dew I."/>
            <person name="Miller J.R."/>
            <person name="Flanigan M.J."/>
            <person name="Edwards N.J."/>
            <person name="Bolanos R."/>
            <person name="Fasulo D."/>
            <person name="Halldorsson B.V."/>
            <person name="Hannenhalli S."/>
            <person name="Turner R."/>
            <person name="Yooseph S."/>
            <person name="Lu F."/>
            <person name="Nusskern D.R."/>
            <person name="Shue B.C."/>
            <person name="Zheng X.H."/>
            <person name="Zhong F."/>
            <person name="Delcher A.L."/>
            <person name="Huson D.H."/>
            <person name="Kravitz S.A."/>
            <person name="Mouchard L."/>
            <person name="Reinert K."/>
            <person name="Remington K.A."/>
            <person name="Clark A.G."/>
            <person name="Waterman M.S."/>
            <person name="Eichler E.E."/>
            <person name="Adams M.D."/>
            <person name="Hunkapiller M.W."/>
            <person name="Myers E.W."/>
            <person name="Venter J.C."/>
        </authorList>
    </citation>
    <scope>NUCLEOTIDE SEQUENCE [LARGE SCALE GENOMIC DNA]</scope>
</reference>
<reference key="4">
    <citation type="journal article" date="2004" name="Genome Res.">
        <title>The status, quality, and expansion of the NIH full-length cDNA project: the Mammalian Gene Collection (MGC).</title>
        <authorList>
            <consortium name="The MGC Project Team"/>
        </authorList>
    </citation>
    <scope>NUCLEOTIDE SEQUENCE [LARGE SCALE MRNA] OF 22-807</scope>
    <source>
        <tissue>Brain</tissue>
    </source>
</reference>
<reference key="5">
    <citation type="journal article" date="2007" name="BMC Genomics">
        <title>The full-ORF clone resource of the German cDNA consortium.</title>
        <authorList>
            <person name="Bechtel S."/>
            <person name="Rosenfelder H."/>
            <person name="Duda A."/>
            <person name="Schmidt C.P."/>
            <person name="Ernst U."/>
            <person name="Wellenreuther R."/>
            <person name="Mehrle A."/>
            <person name="Schuster C."/>
            <person name="Bahr A."/>
            <person name="Bloecker H."/>
            <person name="Heubner D."/>
            <person name="Hoerlein A."/>
            <person name="Michel G."/>
            <person name="Wedler H."/>
            <person name="Koehrer K."/>
            <person name="Ottenwaelder B."/>
            <person name="Poustka A."/>
            <person name="Wiemann S."/>
            <person name="Schupp I."/>
        </authorList>
    </citation>
    <scope>NUCLEOTIDE SEQUENCE [LARGE SCALE MRNA] OF 661-807</scope>
    <source>
        <tissue>Kidney</tissue>
    </source>
</reference>
<reference key="6">
    <citation type="journal article" date="2008" name="Proc. Natl. Acad. Sci. U.S.A.">
        <title>A quantitative atlas of mitotic phosphorylation.</title>
        <authorList>
            <person name="Dephoure N."/>
            <person name="Zhou C."/>
            <person name="Villen J."/>
            <person name="Beausoleil S.A."/>
            <person name="Bakalarski C.E."/>
            <person name="Elledge S.J."/>
            <person name="Gygi S.P."/>
        </authorList>
    </citation>
    <scope>IDENTIFICATION BY MASS SPECTROMETRY [LARGE SCALE ANALYSIS]</scope>
    <source>
        <tissue>Cervix carcinoma</tissue>
    </source>
</reference>
<reference key="7">
    <citation type="journal article" date="2013" name="J. Proteome Res.">
        <title>Toward a comprehensive characterization of a human cancer cell phosphoproteome.</title>
        <authorList>
            <person name="Zhou H."/>
            <person name="Di Palma S."/>
            <person name="Preisinger C."/>
            <person name="Peng M."/>
            <person name="Polat A.N."/>
            <person name="Heck A.J."/>
            <person name="Mohammed S."/>
        </authorList>
    </citation>
    <scope>PHOSPHORYLATION [LARGE SCALE ANALYSIS] AT SER-538 AND SER-754</scope>
    <scope>IDENTIFICATION BY MASS SPECTROMETRY [LARGE SCALE ANALYSIS]</scope>
    <source>
        <tissue>Erythroleukemia</tissue>
    </source>
</reference>
<reference key="8">
    <citation type="journal article" date="2014" name="J. Proteomics">
        <title>An enzyme assisted RP-RPLC approach for in-depth analysis of human liver phosphoproteome.</title>
        <authorList>
            <person name="Bian Y."/>
            <person name="Song C."/>
            <person name="Cheng K."/>
            <person name="Dong M."/>
            <person name="Wang F."/>
            <person name="Huang J."/>
            <person name="Sun D."/>
            <person name="Wang L."/>
            <person name="Ye M."/>
            <person name="Zou H."/>
        </authorList>
    </citation>
    <scope>IDENTIFICATION BY MASS SPECTROMETRY [LARGE SCALE ANALYSIS]</scope>
    <source>
        <tissue>Liver</tissue>
    </source>
</reference>
<reference key="9">
    <citation type="journal article" date="2014" name="Nat. Struct. Mol. Biol.">
        <title>Uncovering global SUMOylation signaling networks in a site-specific manner.</title>
        <authorList>
            <person name="Hendriks I.A."/>
            <person name="D'Souza R.C."/>
            <person name="Yang B."/>
            <person name="Verlaan-de Vries M."/>
            <person name="Mann M."/>
            <person name="Vertegaal A.C."/>
        </authorList>
    </citation>
    <scope>SUMOYLATION [LARGE SCALE ANALYSIS] AT LYS-324</scope>
    <scope>IDENTIFICATION BY MASS SPECTROMETRY [LARGE SCALE ANALYSIS]</scope>
</reference>
<reference key="10">
    <citation type="journal article" date="2017" name="Nat. Struct. Mol. Biol.">
        <title>Site-specific mapping of the human SUMO proteome reveals co-modification with phosphorylation.</title>
        <authorList>
            <person name="Hendriks I.A."/>
            <person name="Lyon D."/>
            <person name="Young C."/>
            <person name="Jensen L.J."/>
            <person name="Vertegaal A.C."/>
            <person name="Nielsen M.L."/>
        </authorList>
    </citation>
    <scope>SUMOYLATION [LARGE SCALE ANALYSIS] AT LYS-135; LYS-195; LYS-324 AND LYS-362</scope>
    <scope>IDENTIFICATION BY MASS SPECTROMETRY [LARGE SCALE ANALYSIS]</scope>
</reference>
<proteinExistence type="evidence at protein level"/>
<name>EPC2_HUMAN</name>
<feature type="chain" id="PRO_0000239295" description="Enhancer of polycomb homolog 2">
    <location>
        <begin position="1"/>
        <end position="807"/>
    </location>
</feature>
<feature type="region of interest" description="Disordered" evidence="2">
    <location>
        <begin position="376"/>
        <end position="396"/>
    </location>
</feature>
<feature type="region of interest" description="Disordered" evidence="2">
    <location>
        <begin position="600"/>
        <end position="628"/>
    </location>
</feature>
<feature type="region of interest" description="Disordered" evidence="2">
    <location>
        <begin position="645"/>
        <end position="673"/>
    </location>
</feature>
<feature type="compositionally biased region" description="Low complexity" evidence="2">
    <location>
        <begin position="600"/>
        <end position="613"/>
    </location>
</feature>
<feature type="compositionally biased region" description="Polar residues" evidence="2">
    <location>
        <begin position="614"/>
        <end position="628"/>
    </location>
</feature>
<feature type="compositionally biased region" description="Polar residues" evidence="2">
    <location>
        <begin position="657"/>
        <end position="673"/>
    </location>
</feature>
<feature type="modified residue" description="Phosphoserine" evidence="4">
    <location>
        <position position="538"/>
    </location>
</feature>
<feature type="modified residue" description="Phosphoserine" evidence="4">
    <location>
        <position position="754"/>
    </location>
</feature>
<feature type="cross-link" description="Glycyl lysine isopeptide (Lys-Gly) (interchain with G-Cter in SUMO2)" evidence="6">
    <location>
        <position position="135"/>
    </location>
</feature>
<feature type="cross-link" description="Glycyl lysine isopeptide (Lys-Gly) (interchain with G-Cter in SUMO2)" evidence="6">
    <location>
        <position position="195"/>
    </location>
</feature>
<feature type="cross-link" description="Glycyl lysine isopeptide (Lys-Gly) (interchain with G-Cter in SUMO2)" evidence="5 6">
    <location>
        <position position="324"/>
    </location>
</feature>
<feature type="cross-link" description="Glycyl lysine isopeptide (Lys-Gly) (interchain with G-Cter in SUMO2)" evidence="6">
    <location>
        <position position="362"/>
    </location>
</feature>
<feature type="sequence conflict" description="In Ref. 5; CAB55993." evidence="3" ref="5">
    <original>N</original>
    <variation>D</variation>
    <location>
        <position position="723"/>
    </location>
</feature>
<sequence>MSKLSFRARALDAAKPLPIYRGKDMPDLNDCVSINRAVPQMPTGMEKEEESEHHLQRAISAQQVFREKKESMVIPVPEAESNVNYYNRLYKGEFKQPKQFIHIQPFNLDNEQPDYDMDSEDETLLNRLNRKMEIKPLQFEIMIDRLEKASSNQLVTLQEAKLLLNEDDYLIKAVYDYWVRKRKNCRGPSLIPQIKQEKRDGSTNNDPYVAFRRRTEKMQTRKNRKNDEASYEKMLKLRREFSRAITILEMIKRREKTKRELLHLTLEVVEKRYHLGDYGGEILNEVKISRSEKELYATPATLHNGNHHKVQECKTKHPHHLSLKEEASDVVRQKKKYPKKPKAEALITSQQPTPETLPVINKSDIKQYDFHSSDEDEFPQVLSPVSEPEEENDPDGPCAFRRRAGCQYYAPRLDQANHSCENSELADLDKLRYRHCLTTLTVPRRCIGFARRRIGRGGRVIMDRISTEHDPVLKQIDPEMLNSFSSSSQTIDFSSNFSRTNASSKHCENRLSLSEILSNIRSCRLQCFQPRLLNLQDSDSEECTSRKPGQTVNNKRVSAASVALLNTSKNGISVTGGITEEQFQTHQQQLVQMQRQQLAQLQQKQQSQHSSQQTHPKAQGSSTSDCMSKTLDSASAHFAASAVVSAPVPSRSEVAKEQNTGHNNINGVVQPSGTSKTLYSTNMALSSSPGISAVQLVRTVGHTTTNHLIPALCTSSPQTLPMNNSCLTNAVHLNNVSVVSPVNVHINTRTSAPSPTALKLATVAASMDRVPKVTPSSAISSIARENHEPERLGLNGIAETTVAMEVT</sequence>
<organism>
    <name type="scientific">Homo sapiens</name>
    <name type="common">Human</name>
    <dbReference type="NCBI Taxonomy" id="9606"/>
    <lineage>
        <taxon>Eukaryota</taxon>
        <taxon>Metazoa</taxon>
        <taxon>Chordata</taxon>
        <taxon>Craniata</taxon>
        <taxon>Vertebrata</taxon>
        <taxon>Euteleostomi</taxon>
        <taxon>Mammalia</taxon>
        <taxon>Eutheria</taxon>
        <taxon>Euarchontoglires</taxon>
        <taxon>Primates</taxon>
        <taxon>Haplorrhini</taxon>
        <taxon>Catarrhini</taxon>
        <taxon>Hominidae</taxon>
        <taxon>Homo</taxon>
    </lineage>
</organism>
<gene>
    <name type="primary">EPC2</name>
</gene>